<proteinExistence type="inferred from homology"/>
<name>SUCC_ACIAD</name>
<sequence>MNLHEYQAKALLKKYGVSVQEGILARSAEEAVAAFEQLGGKFAVIKAQVHAGGRGKAGGVKVVKSKEEAADYANQLIGTNLVTYQTDANGQPVNSVLVCEDVYPVERELYLGAVVDRSSRRVTFMASTEGGVEIEKVAEETPEKIIKVEVDPLVGLQPFQAREVAFALGLKDKQIGQFVKLMAGAYQAFVENDFALFEINPLSVRENGDILAVDAKIGIDSNALYRLPEIAASRDKSQENERELKASEFELNYVALEGNIGCMVNGAGLAMATMDIIKLYGGQPANFLDVGGGATKERVIEAFKLILADTSVQGVLINIFGGIVRCDMIAEAIIAAVQEVNVTVPVVVRLEGNNAELGAKILDESGLKLTSANGLSDAAEKIVAAVKG</sequence>
<reference key="1">
    <citation type="journal article" date="2004" name="Nucleic Acids Res.">
        <title>Unique features revealed by the genome sequence of Acinetobacter sp. ADP1, a versatile and naturally transformation competent bacterium.</title>
        <authorList>
            <person name="Barbe V."/>
            <person name="Vallenet D."/>
            <person name="Fonknechten N."/>
            <person name="Kreimeyer A."/>
            <person name="Oztas S."/>
            <person name="Labarre L."/>
            <person name="Cruveiller S."/>
            <person name="Robert C."/>
            <person name="Duprat S."/>
            <person name="Wincker P."/>
            <person name="Ornston L.N."/>
            <person name="Weissenbach J."/>
            <person name="Marliere P."/>
            <person name="Cohen G.N."/>
            <person name="Medigue C."/>
        </authorList>
    </citation>
    <scope>NUCLEOTIDE SEQUENCE [LARGE SCALE GENOMIC DNA]</scope>
    <source>
        <strain>ATCC 33305 / BD413 / ADP1</strain>
    </source>
</reference>
<dbReference type="EC" id="6.2.1.5" evidence="1"/>
<dbReference type="EMBL" id="CR543861">
    <property type="protein sequence ID" value="CAG69601.1"/>
    <property type="molecule type" value="Genomic_DNA"/>
</dbReference>
<dbReference type="RefSeq" id="WP_004929376.1">
    <property type="nucleotide sequence ID" value="NC_005966.1"/>
</dbReference>
<dbReference type="SMR" id="Q6F8L4"/>
<dbReference type="STRING" id="202950.GCA_001485005_03058"/>
<dbReference type="GeneID" id="45235109"/>
<dbReference type="KEGG" id="aci:ACIAD2873"/>
<dbReference type="eggNOG" id="COG0045">
    <property type="taxonomic scope" value="Bacteria"/>
</dbReference>
<dbReference type="HOGENOM" id="CLU_037430_0_2_6"/>
<dbReference type="OrthoDB" id="9802602at2"/>
<dbReference type="BioCyc" id="ASP62977:ACIAD_RS12970-MONOMER"/>
<dbReference type="UniPathway" id="UPA00223">
    <property type="reaction ID" value="UER00999"/>
</dbReference>
<dbReference type="Proteomes" id="UP000000430">
    <property type="component" value="Chromosome"/>
</dbReference>
<dbReference type="GO" id="GO:0005829">
    <property type="term" value="C:cytosol"/>
    <property type="evidence" value="ECO:0007669"/>
    <property type="project" value="TreeGrafter"/>
</dbReference>
<dbReference type="GO" id="GO:0042709">
    <property type="term" value="C:succinate-CoA ligase complex"/>
    <property type="evidence" value="ECO:0007669"/>
    <property type="project" value="TreeGrafter"/>
</dbReference>
<dbReference type="GO" id="GO:0005524">
    <property type="term" value="F:ATP binding"/>
    <property type="evidence" value="ECO:0007669"/>
    <property type="project" value="UniProtKB-UniRule"/>
</dbReference>
<dbReference type="GO" id="GO:0000287">
    <property type="term" value="F:magnesium ion binding"/>
    <property type="evidence" value="ECO:0007669"/>
    <property type="project" value="UniProtKB-UniRule"/>
</dbReference>
<dbReference type="GO" id="GO:0004775">
    <property type="term" value="F:succinate-CoA ligase (ADP-forming) activity"/>
    <property type="evidence" value="ECO:0007669"/>
    <property type="project" value="UniProtKB-UniRule"/>
</dbReference>
<dbReference type="GO" id="GO:0004776">
    <property type="term" value="F:succinate-CoA ligase (GDP-forming) activity"/>
    <property type="evidence" value="ECO:0007669"/>
    <property type="project" value="RHEA"/>
</dbReference>
<dbReference type="GO" id="GO:0006104">
    <property type="term" value="P:succinyl-CoA metabolic process"/>
    <property type="evidence" value="ECO:0007669"/>
    <property type="project" value="TreeGrafter"/>
</dbReference>
<dbReference type="GO" id="GO:0006099">
    <property type="term" value="P:tricarboxylic acid cycle"/>
    <property type="evidence" value="ECO:0007669"/>
    <property type="project" value="UniProtKB-UniRule"/>
</dbReference>
<dbReference type="FunFam" id="3.30.1490.20:FF:000002">
    <property type="entry name" value="Succinate--CoA ligase [ADP-forming] subunit beta"/>
    <property type="match status" value="1"/>
</dbReference>
<dbReference type="FunFam" id="3.30.470.20:FF:000002">
    <property type="entry name" value="Succinate--CoA ligase [ADP-forming] subunit beta"/>
    <property type="match status" value="1"/>
</dbReference>
<dbReference type="FunFam" id="3.40.50.261:FF:000001">
    <property type="entry name" value="Succinate--CoA ligase [ADP-forming] subunit beta"/>
    <property type="match status" value="1"/>
</dbReference>
<dbReference type="Gene3D" id="3.30.1490.20">
    <property type="entry name" value="ATP-grasp fold, A domain"/>
    <property type="match status" value="1"/>
</dbReference>
<dbReference type="Gene3D" id="3.30.470.20">
    <property type="entry name" value="ATP-grasp fold, B domain"/>
    <property type="match status" value="1"/>
</dbReference>
<dbReference type="Gene3D" id="3.40.50.261">
    <property type="entry name" value="Succinyl-CoA synthetase domains"/>
    <property type="match status" value="1"/>
</dbReference>
<dbReference type="HAMAP" id="MF_00558">
    <property type="entry name" value="Succ_CoA_beta"/>
    <property type="match status" value="1"/>
</dbReference>
<dbReference type="InterPro" id="IPR011761">
    <property type="entry name" value="ATP-grasp"/>
</dbReference>
<dbReference type="InterPro" id="IPR013650">
    <property type="entry name" value="ATP-grasp_succ-CoA_synth-type"/>
</dbReference>
<dbReference type="InterPro" id="IPR013815">
    <property type="entry name" value="ATP_grasp_subdomain_1"/>
</dbReference>
<dbReference type="InterPro" id="IPR017866">
    <property type="entry name" value="Succ-CoA_synthase_bsu_CS"/>
</dbReference>
<dbReference type="InterPro" id="IPR005811">
    <property type="entry name" value="SUCC_ACL_C"/>
</dbReference>
<dbReference type="InterPro" id="IPR005809">
    <property type="entry name" value="Succ_CoA_ligase-like_bsu"/>
</dbReference>
<dbReference type="InterPro" id="IPR016102">
    <property type="entry name" value="Succinyl-CoA_synth-like"/>
</dbReference>
<dbReference type="NCBIfam" id="NF001913">
    <property type="entry name" value="PRK00696.1"/>
    <property type="match status" value="1"/>
</dbReference>
<dbReference type="NCBIfam" id="TIGR01016">
    <property type="entry name" value="sucCoAbeta"/>
    <property type="match status" value="1"/>
</dbReference>
<dbReference type="PANTHER" id="PTHR11815:SF10">
    <property type="entry name" value="SUCCINATE--COA LIGASE [GDP-FORMING] SUBUNIT BETA, MITOCHONDRIAL"/>
    <property type="match status" value="1"/>
</dbReference>
<dbReference type="PANTHER" id="PTHR11815">
    <property type="entry name" value="SUCCINYL-COA SYNTHETASE BETA CHAIN"/>
    <property type="match status" value="1"/>
</dbReference>
<dbReference type="Pfam" id="PF08442">
    <property type="entry name" value="ATP-grasp_2"/>
    <property type="match status" value="1"/>
</dbReference>
<dbReference type="Pfam" id="PF00549">
    <property type="entry name" value="Ligase_CoA"/>
    <property type="match status" value="1"/>
</dbReference>
<dbReference type="PIRSF" id="PIRSF001554">
    <property type="entry name" value="SucCS_beta"/>
    <property type="match status" value="1"/>
</dbReference>
<dbReference type="SUPFAM" id="SSF56059">
    <property type="entry name" value="Glutathione synthetase ATP-binding domain-like"/>
    <property type="match status" value="1"/>
</dbReference>
<dbReference type="SUPFAM" id="SSF52210">
    <property type="entry name" value="Succinyl-CoA synthetase domains"/>
    <property type="match status" value="1"/>
</dbReference>
<dbReference type="PROSITE" id="PS50975">
    <property type="entry name" value="ATP_GRASP"/>
    <property type="match status" value="1"/>
</dbReference>
<dbReference type="PROSITE" id="PS01217">
    <property type="entry name" value="SUCCINYL_COA_LIG_3"/>
    <property type="match status" value="1"/>
</dbReference>
<organism>
    <name type="scientific">Acinetobacter baylyi (strain ATCC 33305 / BD413 / ADP1)</name>
    <dbReference type="NCBI Taxonomy" id="62977"/>
    <lineage>
        <taxon>Bacteria</taxon>
        <taxon>Pseudomonadati</taxon>
        <taxon>Pseudomonadota</taxon>
        <taxon>Gammaproteobacteria</taxon>
        <taxon>Moraxellales</taxon>
        <taxon>Moraxellaceae</taxon>
        <taxon>Acinetobacter</taxon>
    </lineage>
</organism>
<gene>
    <name evidence="1" type="primary">sucC</name>
    <name type="ordered locus">ACIAD2873</name>
</gene>
<feature type="chain" id="PRO_0000102814" description="Succinate--CoA ligase [ADP-forming] subunit beta">
    <location>
        <begin position="1"/>
        <end position="388"/>
    </location>
</feature>
<feature type="domain" description="ATP-grasp" evidence="1">
    <location>
        <begin position="9"/>
        <end position="245"/>
    </location>
</feature>
<feature type="binding site" evidence="1">
    <location>
        <position position="46"/>
    </location>
    <ligand>
        <name>ATP</name>
        <dbReference type="ChEBI" id="CHEBI:30616"/>
    </ligand>
</feature>
<feature type="binding site" evidence="1">
    <location>
        <begin position="53"/>
        <end position="55"/>
    </location>
    <ligand>
        <name>ATP</name>
        <dbReference type="ChEBI" id="CHEBI:30616"/>
    </ligand>
</feature>
<feature type="binding site" evidence="1">
    <location>
        <position position="100"/>
    </location>
    <ligand>
        <name>ATP</name>
        <dbReference type="ChEBI" id="CHEBI:30616"/>
    </ligand>
</feature>
<feature type="binding site" evidence="1">
    <location>
        <position position="103"/>
    </location>
    <ligand>
        <name>ATP</name>
        <dbReference type="ChEBI" id="CHEBI:30616"/>
    </ligand>
</feature>
<feature type="binding site" evidence="1">
    <location>
        <position position="108"/>
    </location>
    <ligand>
        <name>ATP</name>
        <dbReference type="ChEBI" id="CHEBI:30616"/>
    </ligand>
</feature>
<feature type="binding site" evidence="1">
    <location>
        <position position="200"/>
    </location>
    <ligand>
        <name>Mg(2+)</name>
        <dbReference type="ChEBI" id="CHEBI:18420"/>
    </ligand>
</feature>
<feature type="binding site" evidence="1">
    <location>
        <position position="214"/>
    </location>
    <ligand>
        <name>Mg(2+)</name>
        <dbReference type="ChEBI" id="CHEBI:18420"/>
    </ligand>
</feature>
<feature type="binding site" evidence="1">
    <location>
        <position position="265"/>
    </location>
    <ligand>
        <name>substrate</name>
        <note>ligand shared with subunit alpha</note>
    </ligand>
</feature>
<feature type="binding site" evidence="1">
    <location>
        <begin position="322"/>
        <end position="324"/>
    </location>
    <ligand>
        <name>substrate</name>
        <note>ligand shared with subunit alpha</note>
    </ligand>
</feature>
<comment type="function">
    <text evidence="1">Succinyl-CoA synthetase functions in the citric acid cycle (TCA), coupling the hydrolysis of succinyl-CoA to the synthesis of either ATP or GTP and thus represents the only step of substrate-level phosphorylation in the TCA. The beta subunit provides nucleotide specificity of the enzyme and binds the substrate succinate, while the binding sites for coenzyme A and phosphate are found in the alpha subunit.</text>
</comment>
<comment type="catalytic activity">
    <reaction evidence="1">
        <text>succinate + ATP + CoA = succinyl-CoA + ADP + phosphate</text>
        <dbReference type="Rhea" id="RHEA:17661"/>
        <dbReference type="ChEBI" id="CHEBI:30031"/>
        <dbReference type="ChEBI" id="CHEBI:30616"/>
        <dbReference type="ChEBI" id="CHEBI:43474"/>
        <dbReference type="ChEBI" id="CHEBI:57287"/>
        <dbReference type="ChEBI" id="CHEBI:57292"/>
        <dbReference type="ChEBI" id="CHEBI:456216"/>
        <dbReference type="EC" id="6.2.1.5"/>
    </reaction>
    <physiologicalReaction direction="right-to-left" evidence="1">
        <dbReference type="Rhea" id="RHEA:17663"/>
    </physiologicalReaction>
</comment>
<comment type="catalytic activity">
    <reaction evidence="1">
        <text>GTP + succinate + CoA = succinyl-CoA + GDP + phosphate</text>
        <dbReference type="Rhea" id="RHEA:22120"/>
        <dbReference type="ChEBI" id="CHEBI:30031"/>
        <dbReference type="ChEBI" id="CHEBI:37565"/>
        <dbReference type="ChEBI" id="CHEBI:43474"/>
        <dbReference type="ChEBI" id="CHEBI:57287"/>
        <dbReference type="ChEBI" id="CHEBI:57292"/>
        <dbReference type="ChEBI" id="CHEBI:58189"/>
    </reaction>
    <physiologicalReaction direction="right-to-left" evidence="1">
        <dbReference type="Rhea" id="RHEA:22122"/>
    </physiologicalReaction>
</comment>
<comment type="cofactor">
    <cofactor evidence="1">
        <name>Mg(2+)</name>
        <dbReference type="ChEBI" id="CHEBI:18420"/>
    </cofactor>
    <text evidence="1">Binds 1 Mg(2+) ion per subunit.</text>
</comment>
<comment type="pathway">
    <text evidence="1">Carbohydrate metabolism; tricarboxylic acid cycle; succinate from succinyl-CoA (ligase route): step 1/1.</text>
</comment>
<comment type="subunit">
    <text evidence="1">Heterotetramer of two alpha and two beta subunits.</text>
</comment>
<comment type="similarity">
    <text evidence="1">Belongs to the succinate/malate CoA ligase beta subunit family.</text>
</comment>
<accession>Q6F8L4</accession>
<evidence type="ECO:0000255" key="1">
    <source>
        <dbReference type="HAMAP-Rule" id="MF_00558"/>
    </source>
</evidence>
<keyword id="KW-0067">ATP-binding</keyword>
<keyword id="KW-0436">Ligase</keyword>
<keyword id="KW-0460">Magnesium</keyword>
<keyword id="KW-0479">Metal-binding</keyword>
<keyword id="KW-0547">Nucleotide-binding</keyword>
<keyword id="KW-0816">Tricarboxylic acid cycle</keyword>
<protein>
    <recommendedName>
        <fullName evidence="1">Succinate--CoA ligase [ADP-forming] subunit beta</fullName>
        <ecNumber evidence="1">6.2.1.5</ecNumber>
    </recommendedName>
    <alternativeName>
        <fullName evidence="1">Succinyl-CoA synthetase subunit beta</fullName>
        <shortName evidence="1">SCS-beta</shortName>
    </alternativeName>
</protein>